<proteinExistence type="inferred from homology"/>
<accession>A1DA64</accession>
<evidence type="ECO:0000250" key="1">
    <source>
        <dbReference type="UniProtKB" id="Q4WAW9"/>
    </source>
</evidence>
<evidence type="ECO:0000269" key="2">
    <source>
    </source>
</evidence>
<evidence type="ECO:0000303" key="3">
    <source>
    </source>
</evidence>
<evidence type="ECO:0000305" key="4"/>
<name>FTMF_NEOFI</name>
<organism>
    <name type="scientific">Neosartorya fischeri (strain ATCC 1020 / DSM 3700 / CBS 544.65 / FGSC A1164 / JCM 1740 / NRRL 181 / WB 181)</name>
    <name type="common">Aspergillus fischerianus</name>
    <dbReference type="NCBI Taxonomy" id="331117"/>
    <lineage>
        <taxon>Eukaryota</taxon>
        <taxon>Fungi</taxon>
        <taxon>Dikarya</taxon>
        <taxon>Ascomycota</taxon>
        <taxon>Pezizomycotina</taxon>
        <taxon>Eurotiomycetes</taxon>
        <taxon>Eurotiomycetidae</taxon>
        <taxon>Eurotiales</taxon>
        <taxon>Aspergillaceae</taxon>
        <taxon>Aspergillus</taxon>
        <taxon>Aspergillus subgen. Fumigati</taxon>
    </lineage>
</organism>
<dbReference type="EC" id="1.14.11.38" evidence="1"/>
<dbReference type="EMBL" id="DS027694">
    <property type="protein sequence ID" value="EAW19754.1"/>
    <property type="molecule type" value="Genomic_DNA"/>
</dbReference>
<dbReference type="RefSeq" id="XP_001261651.1">
    <property type="nucleotide sequence ID" value="XM_001261650.1"/>
</dbReference>
<dbReference type="SMR" id="A1DA64"/>
<dbReference type="STRING" id="331117.A1DA64"/>
<dbReference type="EnsemblFungi" id="EAW19754">
    <property type="protein sequence ID" value="EAW19754"/>
    <property type="gene ID" value="NFIA_093740"/>
</dbReference>
<dbReference type="GeneID" id="4588684"/>
<dbReference type="KEGG" id="nfi:NFIA_093740"/>
<dbReference type="VEuPathDB" id="FungiDB:NFIA_093740"/>
<dbReference type="eggNOG" id="ENOG502S7ZW">
    <property type="taxonomic scope" value="Eukaryota"/>
</dbReference>
<dbReference type="HOGENOM" id="CLU_047725_1_0_1"/>
<dbReference type="OMA" id="ADKYPPH"/>
<dbReference type="OrthoDB" id="445007at2759"/>
<dbReference type="Proteomes" id="UP000006702">
    <property type="component" value="Unassembled WGS sequence"/>
</dbReference>
<dbReference type="GO" id="GO:0051213">
    <property type="term" value="F:dioxygenase activity"/>
    <property type="evidence" value="ECO:0007669"/>
    <property type="project" value="UniProtKB-KW"/>
</dbReference>
<dbReference type="GO" id="GO:0009820">
    <property type="term" value="P:alkaloid metabolic process"/>
    <property type="evidence" value="ECO:0007669"/>
    <property type="project" value="UniProtKB-KW"/>
</dbReference>
<dbReference type="GO" id="GO:0009058">
    <property type="term" value="P:biosynthetic process"/>
    <property type="evidence" value="ECO:0007669"/>
    <property type="project" value="UniProtKB-ARBA"/>
</dbReference>
<dbReference type="Gene3D" id="2.60.120.620">
    <property type="entry name" value="q2cbj1_9rhob like domain"/>
    <property type="match status" value="1"/>
</dbReference>
<dbReference type="InterPro" id="IPR008775">
    <property type="entry name" value="Phytyl_CoA_dOase-like"/>
</dbReference>
<dbReference type="PANTHER" id="PTHR20883:SF41">
    <property type="entry name" value="IRON_ALPHA-KETOGLUTARATE-DEPENDENT DIOXYGENASE ASQJ"/>
    <property type="match status" value="1"/>
</dbReference>
<dbReference type="PANTHER" id="PTHR20883">
    <property type="entry name" value="PHYTANOYL-COA DIOXYGENASE DOMAIN CONTAINING 1"/>
    <property type="match status" value="1"/>
</dbReference>
<dbReference type="Pfam" id="PF05721">
    <property type="entry name" value="PhyH"/>
    <property type="match status" value="1"/>
</dbReference>
<dbReference type="SUPFAM" id="SSF51197">
    <property type="entry name" value="Clavaminate synthase-like"/>
    <property type="match status" value="1"/>
</dbReference>
<sequence length="291" mass="32740">MTVDSKPQLQRLAADVDVDLMCRLLEEDGAFILKDLLPLDVVESFNRELDVQMAIPPPKGERLLADKYPPHFKYVPNVATTCPTFRNNILINPVIHAICEGYFQRTGDYWLSAAFLREIESGMPAQPFHRDDATHPLMHHQPLEAPPISLSVIFPLTEFTEENGATEVILGSHRWMEVGTPERDQAVLATMDPGDVLVVRQRVVHAGGGNRTTTGDPRRVVLAYFNSCQLTPFETYRTMPRETVESMTVLGQRMLGWRTMKPSDPNIVGINIIDDKRLENVLQLKATDLPA</sequence>
<gene>
    <name evidence="3" type="primary">ftmOx1</name>
    <name evidence="1" type="synonym">ftmF</name>
    <name type="ORF">NFIA_093740</name>
</gene>
<protein>
    <recommendedName>
        <fullName evidence="3">Verruculogen synthase</fullName>
        <ecNumber evidence="1">1.14.11.38</ecNumber>
    </recommendedName>
    <alternativeName>
        <fullName evidence="1">Fumitremorgin biosynthesis protein F</fullName>
    </alternativeName>
</protein>
<keyword id="KW-0017">Alkaloid metabolism</keyword>
<keyword id="KW-0223">Dioxygenase</keyword>
<keyword id="KW-0408">Iron</keyword>
<keyword id="KW-0560">Oxidoreductase</keyword>
<keyword id="KW-1185">Reference proteome</keyword>
<keyword id="KW-0843">Virulence</keyword>
<comment type="function">
    <text evidence="1 2">Verruculogen synthase; part of the gene cluster that mediates the biosynthesis of fumitremorgins, indole alkaloids that carry not only intriguing chemical structures, but also interesting biological and pharmacological activities (PubMed:23109474). The biosynthesis of fumitremorgin-type alkaloids begins by condensation of the two amino acids L-tryptophan and L-proline to brevianamide F, catalyzed by the non-ribosomal peptide synthetase ftmPS/ftmA (By similarity). Brevianamide F is then prenylated by the prenyltransferase ftmPT1/ftmB in the presence of dimethylallyl diphosphate, resulting in the formation of tryprostatin B (By similarity). The three cytochrome P450 monooxygenases, ftmP450-1/ftmC, ftmP450-2/ftmE and ftmP450-3/FtmG, are responsible for the conversion of tryprostatin B to 6-hydroxytryprostatin B, tryprostatin A to fumitremorgin C and fumitremorgin C to 12,13-dihydroxyfumitremorgin C, respectively (By similarity). The putative methyltransferase ftmMT/ftmD is expected for the conversion of 6-hydroxytryprostatin B to tryprostatin A (By similarity). FtmPT2/FtmH catalyzes the prenylation of 12,13-dihydroxyfumitre-morgin C in the presence of dimethylallyl diphosphate, resulting in the formation of fumitremorgin B (By similarity). Fumitremorgin B is further converted to verruculogen by ftmOx1/ftmF via the insertion of an endoperoxide bond between the two prenyl moieties (By similarity). Finally, verruculogen is further converted to fumitremorgin A by the verruculogen prenyltransferase ftmPT3 (PubMed:23109474).</text>
</comment>
<comment type="catalytic activity">
    <reaction evidence="1">
        <text>fumitremorgin B + 2-oxoglutarate + AH2 + 2 O2 = verruculogen + succinate + A + CO2 + H2O</text>
        <dbReference type="Rhea" id="RHEA:35975"/>
        <dbReference type="ChEBI" id="CHEBI:13193"/>
        <dbReference type="ChEBI" id="CHEBI:15377"/>
        <dbReference type="ChEBI" id="CHEBI:15379"/>
        <dbReference type="ChEBI" id="CHEBI:16526"/>
        <dbReference type="ChEBI" id="CHEBI:16810"/>
        <dbReference type="ChEBI" id="CHEBI:17499"/>
        <dbReference type="ChEBI" id="CHEBI:30031"/>
        <dbReference type="ChEBI" id="CHEBI:64531"/>
        <dbReference type="ChEBI" id="CHEBI:72765"/>
        <dbReference type="EC" id="1.14.11.38"/>
    </reaction>
</comment>
<comment type="cofactor">
    <cofactor evidence="1">
        <name>Fe cation</name>
        <dbReference type="ChEBI" id="CHEBI:24875"/>
    </cofactor>
</comment>
<comment type="pathway">
    <text evidence="1">Mycotoxin biosynthesis.</text>
</comment>
<comment type="subunit">
    <text evidence="1">Homodimer.</text>
</comment>
<comment type="similarity">
    <text evidence="4">Belongs to the PhyH family.</text>
</comment>
<feature type="chain" id="PRO_0000424135" description="Verruculogen synthase">
    <location>
        <begin position="1"/>
        <end position="291"/>
    </location>
</feature>
<reference key="1">
    <citation type="journal article" date="2008" name="PLoS Genet.">
        <title>Genomic islands in the pathogenic filamentous fungus Aspergillus fumigatus.</title>
        <authorList>
            <person name="Fedorova N.D."/>
            <person name="Khaldi N."/>
            <person name="Joardar V.S."/>
            <person name="Maiti R."/>
            <person name="Amedeo P."/>
            <person name="Anderson M.J."/>
            <person name="Crabtree J."/>
            <person name="Silva J.C."/>
            <person name="Badger J.H."/>
            <person name="Albarraq A."/>
            <person name="Angiuoli S."/>
            <person name="Bussey H."/>
            <person name="Bowyer P."/>
            <person name="Cotty P.J."/>
            <person name="Dyer P.S."/>
            <person name="Egan A."/>
            <person name="Galens K."/>
            <person name="Fraser-Liggett C.M."/>
            <person name="Haas B.J."/>
            <person name="Inman J.M."/>
            <person name="Kent R."/>
            <person name="Lemieux S."/>
            <person name="Malavazi I."/>
            <person name="Orvis J."/>
            <person name="Roemer T."/>
            <person name="Ronning C.M."/>
            <person name="Sundaram J.P."/>
            <person name="Sutton G."/>
            <person name="Turner G."/>
            <person name="Venter J.C."/>
            <person name="White O.R."/>
            <person name="Whitty B.R."/>
            <person name="Youngman P."/>
            <person name="Wolfe K.H."/>
            <person name="Goldman G.H."/>
            <person name="Wortman J.R."/>
            <person name="Jiang B."/>
            <person name="Denning D.W."/>
            <person name="Nierman W.C."/>
        </authorList>
    </citation>
    <scope>NUCLEOTIDE SEQUENCE [LARGE SCALE GENOMIC DNA]</scope>
    <source>
        <strain>ATCC 1020 / DSM 3700 / CBS 544.65 / FGSC A1164 / JCM 1740 / NRRL 181 / WB 181</strain>
    </source>
</reference>
<reference key="2">
    <citation type="journal article" date="2012" name="ChemBioChem">
        <title>Identification of the verruculogen prenyltransferase FtmPT3 by a combination of chemical, bioinformatic and biochemical approaches.</title>
        <authorList>
            <person name="Mundt K."/>
            <person name="Wollinsky B."/>
            <person name="Ruan H.L."/>
            <person name="Zhu T."/>
            <person name="Li S.M."/>
        </authorList>
    </citation>
    <scope>FUNCTION</scope>
</reference>